<dbReference type="EC" id="2.7.10.2"/>
<dbReference type="EMBL" id="AF337958">
    <property type="protein sequence ID" value="AAK11661.1"/>
    <property type="molecule type" value="Genomic_DNA"/>
</dbReference>
<dbReference type="EMBL" id="AF355776">
    <property type="protein sequence ID" value="AAK43605.1"/>
    <property type="molecule type" value="Genomic_DNA"/>
</dbReference>
<dbReference type="RefSeq" id="WP_000197406.1">
    <property type="nucleotide sequence ID" value="NZ_RPAX01000011.1"/>
</dbReference>
<dbReference type="RefSeq" id="WP_000197418.1">
    <property type="nucleotide sequence ID" value="NZ_WNJB01000002.1"/>
</dbReference>
<dbReference type="SMR" id="P0C0T9"/>
<dbReference type="UniPathway" id="UPA00934"/>
<dbReference type="GO" id="GO:0005886">
    <property type="term" value="C:plasma membrane"/>
    <property type="evidence" value="ECO:0007669"/>
    <property type="project" value="TreeGrafter"/>
</dbReference>
<dbReference type="GO" id="GO:0005524">
    <property type="term" value="F:ATP binding"/>
    <property type="evidence" value="ECO:0007669"/>
    <property type="project" value="UniProtKB-KW"/>
</dbReference>
<dbReference type="GO" id="GO:0004715">
    <property type="term" value="F:non-membrane spanning protein tyrosine kinase activity"/>
    <property type="evidence" value="ECO:0007669"/>
    <property type="project" value="UniProtKB-EC"/>
</dbReference>
<dbReference type="GO" id="GO:0045227">
    <property type="term" value="P:capsule polysaccharide biosynthetic process"/>
    <property type="evidence" value="ECO:0007669"/>
    <property type="project" value="UniProtKB-UniPathway"/>
</dbReference>
<dbReference type="CDD" id="cd05387">
    <property type="entry name" value="BY-kinase"/>
    <property type="match status" value="1"/>
</dbReference>
<dbReference type="Gene3D" id="3.40.50.300">
    <property type="entry name" value="P-loop containing nucleotide triphosphate hydrolases"/>
    <property type="match status" value="1"/>
</dbReference>
<dbReference type="InterPro" id="IPR025669">
    <property type="entry name" value="AAA_dom"/>
</dbReference>
<dbReference type="InterPro" id="IPR050445">
    <property type="entry name" value="Bact_polysacc_biosynth/exp"/>
</dbReference>
<dbReference type="InterPro" id="IPR027417">
    <property type="entry name" value="P-loop_NTPase"/>
</dbReference>
<dbReference type="InterPro" id="IPR005702">
    <property type="entry name" value="Wzc-like_C"/>
</dbReference>
<dbReference type="NCBIfam" id="TIGR01007">
    <property type="entry name" value="eps_fam"/>
    <property type="match status" value="1"/>
</dbReference>
<dbReference type="PANTHER" id="PTHR32309:SF13">
    <property type="entry name" value="FERRIC ENTEROBACTIN TRANSPORT PROTEIN FEPE"/>
    <property type="match status" value="1"/>
</dbReference>
<dbReference type="PANTHER" id="PTHR32309">
    <property type="entry name" value="TYROSINE-PROTEIN KINASE"/>
    <property type="match status" value="1"/>
</dbReference>
<dbReference type="Pfam" id="PF13614">
    <property type="entry name" value="AAA_31"/>
    <property type="match status" value="1"/>
</dbReference>
<dbReference type="SUPFAM" id="SSF52540">
    <property type="entry name" value="P-loop containing nucleoside triphosphate hydrolases"/>
    <property type="match status" value="1"/>
</dbReference>
<organism>
    <name type="scientific">Streptococcus agalactiae</name>
    <dbReference type="NCBI Taxonomy" id="1311"/>
    <lineage>
        <taxon>Bacteria</taxon>
        <taxon>Bacillati</taxon>
        <taxon>Bacillota</taxon>
        <taxon>Bacilli</taxon>
        <taxon>Lactobacillales</taxon>
        <taxon>Streptococcaceae</taxon>
        <taxon>Streptococcus</taxon>
    </lineage>
</organism>
<gene>
    <name type="primary">cpsD</name>
    <name type="synonym">cpsIaD</name>
</gene>
<name>CPSD_STRAG</name>
<feature type="chain" id="PRO_0000217237" description="Tyrosine-protein kinase CpsD">
    <location>
        <begin position="1"/>
        <end position="229"/>
    </location>
</feature>
<feature type="sequence variant" description="In strain: CNTC 1/82.">
    <original>T</original>
    <variation>I</variation>
    <location>
        <position position="54"/>
    </location>
</feature>
<feature type="sequence variant" description="In strain: CNTC 1/82.">
    <original>S</original>
    <variation>N</variation>
    <location>
        <position position="167"/>
    </location>
</feature>
<feature type="sequence variant" description="In strain: CNTC 1/82.">
    <original>V</original>
    <variation>I</variation>
    <location>
        <position position="173"/>
    </location>
</feature>
<feature type="sequence variant" description="In strain: CNTC 1/82.">
    <original>G</original>
    <variation>GDYG</variation>
    <location>
        <position position="219"/>
    </location>
</feature>
<accession>P0C0T9</accession>
<accession>Q93TJ2</accession>
<accession>Q9ALX5</accession>
<accession>Q9S0S7</accession>
<sequence length="229" mass="25053">MTRLEIVDSKLRQAKKTEEYFNAIRTNIQFSGKENKILAITSVREGEGKSTTSTSLALSLAQAGFKTLLIDADTRNSVMSGTFKATGTIKGLTNYLSGNADLGDIICETNVPRLMVVPSGKVPPNPTALLQNAYFNKMIEAIKNIFDYIIIDTPPIGLVVDAAIIASACDGFVLVTQAGRIKRNYVEKAKEQMEQSGSKFLGIILNKVNESVATYGDYGNYGKRDRKRK</sequence>
<evidence type="ECO:0000250" key="1"/>
<evidence type="ECO:0000305" key="2"/>
<keyword id="KW-0067">ATP-binding</keyword>
<keyword id="KW-0972">Capsule biogenesis/degradation</keyword>
<keyword id="KW-0270">Exopolysaccharide synthesis</keyword>
<keyword id="KW-0418">Kinase</keyword>
<keyword id="KW-0547">Nucleotide-binding</keyword>
<keyword id="KW-0597">Phosphoprotein</keyword>
<keyword id="KW-0808">Transferase</keyword>
<keyword id="KW-0829">Tyrosine-protein kinase</keyword>
<comment type="function">
    <text evidence="1">Involved in the regulation of capsular polysaccharide biosynthesis. Autophosphorylation of CpsD attenuates its activity and reduces the level of encapsulation. May be part of a complex that directs the coordinated polymerization and export to the cell surface of the capsular polysaccharide (By similarity).</text>
</comment>
<comment type="catalytic activity">
    <reaction>
        <text>L-tyrosyl-[protein] + ATP = O-phospho-L-tyrosyl-[protein] + ADP + H(+)</text>
        <dbReference type="Rhea" id="RHEA:10596"/>
        <dbReference type="Rhea" id="RHEA-COMP:10136"/>
        <dbReference type="Rhea" id="RHEA-COMP:20101"/>
        <dbReference type="ChEBI" id="CHEBI:15378"/>
        <dbReference type="ChEBI" id="CHEBI:30616"/>
        <dbReference type="ChEBI" id="CHEBI:46858"/>
        <dbReference type="ChEBI" id="CHEBI:61978"/>
        <dbReference type="ChEBI" id="CHEBI:456216"/>
        <dbReference type="EC" id="2.7.10.2"/>
    </reaction>
</comment>
<comment type="activity regulation">
    <text evidence="1">Dephosphorylated and activated by CpsB.</text>
</comment>
<comment type="pathway">
    <text>Capsule biogenesis; capsule polysaccharide biosynthesis.</text>
</comment>
<comment type="PTM">
    <text evidence="1">Autophosphorylated.</text>
</comment>
<comment type="similarity">
    <text evidence="2">Belongs to the CpsD/CapB family.</text>
</comment>
<reference key="1">
    <citation type="submission" date="2001-01" db="EMBL/GenBank/DDBJ databases">
        <authorList>
            <person name="McKinnon K."/>
            <person name="Chaffin D.O."/>
            <person name="Rubens C.E."/>
        </authorList>
    </citation>
    <scope>NUCLEOTIDE SEQUENCE [GENOMIC DNA]</scope>
    <source>
        <strain>NT6 / Serotype VI</strain>
    </source>
</reference>
<reference key="2">
    <citation type="submission" date="2001-03" db="EMBL/GenBank/DDBJ databases">
        <authorList>
            <person name="McKinnon K."/>
            <person name="Chaffin D.O."/>
            <person name="Rubens C.E."/>
        </authorList>
    </citation>
    <scope>NUCLEOTIDE SEQUENCE [GENOMIC DNA]</scope>
    <source>
        <strain>ATCC 49446 / 3139 / CNCTC 1/82 / Serotype IV</strain>
    </source>
</reference>
<proteinExistence type="inferred from homology"/>
<protein>
    <recommendedName>
        <fullName>Tyrosine-protein kinase CpsD</fullName>
        <ecNumber>2.7.10.2</ecNumber>
    </recommendedName>
</protein>